<organism evidence="7">
    <name type="scientific">Caenorhabditis elegans</name>
    <dbReference type="NCBI Taxonomy" id="6239"/>
    <lineage>
        <taxon>Eukaryota</taxon>
        <taxon>Metazoa</taxon>
        <taxon>Ecdysozoa</taxon>
        <taxon>Nematoda</taxon>
        <taxon>Chromadorea</taxon>
        <taxon>Rhabditida</taxon>
        <taxon>Rhabditina</taxon>
        <taxon>Rhabditomorpha</taxon>
        <taxon>Rhabditoidea</taxon>
        <taxon>Rhabditidae</taxon>
        <taxon>Peloderinae</taxon>
        <taxon>Caenorhabditis</taxon>
    </lineage>
</organism>
<reference evidence="8" key="1">
    <citation type="journal article" date="1998" name="Science">
        <title>Genome sequence of the nematode C. elegans: a platform for investigating biology.</title>
        <authorList>
            <consortium name="The C. elegans sequencing consortium"/>
        </authorList>
    </citation>
    <scope>NUCLEOTIDE SEQUENCE [LARGE SCALE GENOMIC DNA]</scope>
    <source>
        <strain evidence="8">Bristol N2</strain>
    </source>
</reference>
<reference evidence="6" key="2">
    <citation type="journal article" date="2014" name="Dev. Biol.">
        <title>The PAF1 complex is involved in embryonic epidermal morphogenesis in Caenorhabditis elegans.</title>
        <authorList>
            <person name="Kubota Y."/>
            <person name="Tsuyama K."/>
            <person name="Takabayashi Y."/>
            <person name="Haruta N."/>
            <person name="Maruyama R."/>
            <person name="Iida N."/>
            <person name="Sugimoto A."/>
        </authorList>
    </citation>
    <scope>SUBCELLULAR LOCATION</scope>
    <scope>DEVELOPMENTAL STAGE</scope>
    <scope>DISRUPTION PHENOTYPE</scope>
</reference>
<dbReference type="EMBL" id="Z70752">
    <property type="protein sequence ID" value="CAA94759.1"/>
    <property type="molecule type" value="Genomic_DNA"/>
</dbReference>
<dbReference type="EMBL" id="Z81101">
    <property type="protein sequence ID" value="CAA94759.1"/>
    <property type="status" value="JOINED"/>
    <property type="molecule type" value="Genomic_DNA"/>
</dbReference>
<dbReference type="PIR" id="T21325">
    <property type="entry name" value="T21325"/>
</dbReference>
<dbReference type="RefSeq" id="NP_505473.1">
    <property type="nucleotide sequence ID" value="NM_073072.5"/>
</dbReference>
<dbReference type="SMR" id="G5EBY0"/>
<dbReference type="ComplexPortal" id="CPX-966">
    <property type="entry name" value="PAF1 complex"/>
</dbReference>
<dbReference type="FunCoup" id="G5EBY0">
    <property type="interactions" value="3609"/>
</dbReference>
<dbReference type="IntAct" id="G5EBY0">
    <property type="interactions" value="1"/>
</dbReference>
<dbReference type="STRING" id="6239.F25B3.6.1"/>
<dbReference type="PaxDb" id="6239-F25B3.6"/>
<dbReference type="PeptideAtlas" id="G5EBY0"/>
<dbReference type="EnsemblMetazoa" id="F25B3.6.1">
    <property type="protein sequence ID" value="F25B3.6.1"/>
    <property type="gene ID" value="WBGene00009103"/>
</dbReference>
<dbReference type="GeneID" id="179345"/>
<dbReference type="KEGG" id="cel:CELE_F25B3.6"/>
<dbReference type="AGR" id="WB:WBGene00009103"/>
<dbReference type="CTD" id="179345"/>
<dbReference type="WormBase" id="F25B3.6">
    <property type="protein sequence ID" value="CE09619"/>
    <property type="gene ID" value="WBGene00009103"/>
    <property type="gene designation" value="rtfo-1"/>
</dbReference>
<dbReference type="eggNOG" id="KOG2402">
    <property type="taxonomic scope" value="Eukaryota"/>
</dbReference>
<dbReference type="GeneTree" id="ENSGT00940000168478"/>
<dbReference type="HOGENOM" id="CLU_018644_0_1_1"/>
<dbReference type="InParanoid" id="G5EBY0"/>
<dbReference type="OMA" id="ISGCYAR"/>
<dbReference type="OrthoDB" id="166375at2759"/>
<dbReference type="PhylomeDB" id="G5EBY0"/>
<dbReference type="PRO" id="PR:G5EBY0"/>
<dbReference type="Proteomes" id="UP000001940">
    <property type="component" value="Chromosome V"/>
</dbReference>
<dbReference type="Bgee" id="WBGene00009103">
    <property type="expression patterns" value="Expressed in embryo and 4 other cell types or tissues"/>
</dbReference>
<dbReference type="GO" id="GO:0016593">
    <property type="term" value="C:Cdc73/Paf1 complex"/>
    <property type="evidence" value="ECO:0000318"/>
    <property type="project" value="GO_Central"/>
</dbReference>
<dbReference type="GO" id="GO:0005634">
    <property type="term" value="C:nucleus"/>
    <property type="evidence" value="ECO:0000314"/>
    <property type="project" value="WormBase"/>
</dbReference>
<dbReference type="GO" id="GO:0003677">
    <property type="term" value="F:DNA binding"/>
    <property type="evidence" value="ECO:0007669"/>
    <property type="project" value="InterPro"/>
</dbReference>
<dbReference type="GO" id="GO:1990269">
    <property type="term" value="F:RNA polymerase II C-terminal domain phosphoserine binding"/>
    <property type="evidence" value="ECO:0000318"/>
    <property type="project" value="GO_Central"/>
</dbReference>
<dbReference type="GO" id="GO:0006368">
    <property type="term" value="P:transcription elongation by RNA polymerase II"/>
    <property type="evidence" value="ECO:0000303"/>
    <property type="project" value="ComplexPortal"/>
</dbReference>
<dbReference type="Gene3D" id="3.90.70.200">
    <property type="entry name" value="Plus-3 domain"/>
    <property type="match status" value="1"/>
</dbReference>
<dbReference type="InterPro" id="IPR004343">
    <property type="entry name" value="Plus-3_dom"/>
</dbReference>
<dbReference type="InterPro" id="IPR036128">
    <property type="entry name" value="Plus3-like_sf"/>
</dbReference>
<dbReference type="PANTHER" id="PTHR13115">
    <property type="entry name" value="RNA POLYMERASE-ASSOCIATED PROTEIN RTF1 HOMOLOG"/>
    <property type="match status" value="1"/>
</dbReference>
<dbReference type="PANTHER" id="PTHR13115:SF8">
    <property type="entry name" value="RNA POLYMERASE-ASSOCIATED PROTEIN RTF1 HOMOLOG"/>
    <property type="match status" value="1"/>
</dbReference>
<dbReference type="Pfam" id="PF03126">
    <property type="entry name" value="Plus-3"/>
    <property type="match status" value="1"/>
</dbReference>
<dbReference type="SMART" id="SM00719">
    <property type="entry name" value="Plus3"/>
    <property type="match status" value="1"/>
</dbReference>
<dbReference type="SUPFAM" id="SSF159042">
    <property type="entry name" value="Plus3-like"/>
    <property type="match status" value="1"/>
</dbReference>
<dbReference type="PROSITE" id="PS51360">
    <property type="entry name" value="PLUS3"/>
    <property type="match status" value="1"/>
</dbReference>
<proteinExistence type="evidence at transcript level"/>
<comment type="function">
    <text evidence="1">Component of the PAF1 complex which is a multifunctional complex involved in transcription initiation via genetic interactions with TATA-binding proteins, elongation and transcription-coupled histone modification.</text>
</comment>
<comment type="subunit">
    <text evidence="1">Component of the PAF1 complex which consists of at least cdc-73, ctr-9, leo-1, pafo-1 and rtfo-1.</text>
</comment>
<comment type="subcellular location">
    <subcellularLocation>
        <location evidence="5">Nucleus</location>
    </subcellularLocation>
    <text evidence="5">Localization is independent of the other PAF1 complex components.</text>
</comment>
<comment type="developmental stage">
    <text evidence="5">Expressed in somatic cells, but not in germ cells, after the 30 cell stage.</text>
</comment>
<comment type="disruption phenotype">
    <text evidence="5">RNAi-mediated knock-down is mostly embryonic lethal. Embryogenesis proceeds more slowly, with embryos displaying defects in the positioning and shape of epidermal cells.</text>
</comment>
<accession>G5EBY0</accession>
<protein>
    <recommendedName>
        <fullName evidence="1">RNA polymerase-associated protein RTF1 homolog</fullName>
    </recommendedName>
</protein>
<gene>
    <name evidence="9" type="primary">rtfo-1</name>
    <name evidence="9" type="ORF">F25B3.6</name>
</gene>
<evidence type="ECO:0000250" key="1">
    <source>
        <dbReference type="UniProtKB" id="P53064"/>
    </source>
</evidence>
<evidence type="ECO:0000255" key="2"/>
<evidence type="ECO:0000255" key="3">
    <source>
        <dbReference type="PROSITE-ProRule" id="PRU00693"/>
    </source>
</evidence>
<evidence type="ECO:0000256" key="4">
    <source>
        <dbReference type="SAM" id="MobiDB-lite"/>
    </source>
</evidence>
<evidence type="ECO:0000269" key="5">
    <source>
    </source>
</evidence>
<evidence type="ECO:0000305" key="6"/>
<evidence type="ECO:0000312" key="7">
    <source>
        <dbReference type="EMBL" id="CAA94759.1"/>
    </source>
</evidence>
<evidence type="ECO:0000312" key="8">
    <source>
        <dbReference type="Proteomes" id="UP000001940"/>
    </source>
</evidence>
<evidence type="ECO:0000312" key="9">
    <source>
        <dbReference type="WormBase" id="F25B3.6"/>
    </source>
</evidence>
<feature type="chain" id="PRO_0000431508" description="RNA polymerase-associated protein RTF1 homolog">
    <location>
        <begin position="1"/>
        <end position="613"/>
    </location>
</feature>
<feature type="domain" description="Plus3" evidence="3">
    <location>
        <begin position="252"/>
        <end position="383"/>
    </location>
</feature>
<feature type="region of interest" description="Disordered" evidence="4">
    <location>
        <begin position="1"/>
        <end position="90"/>
    </location>
</feature>
<feature type="region of interest" description="Disordered" evidence="4">
    <location>
        <begin position="121"/>
        <end position="247"/>
    </location>
</feature>
<feature type="region of interest" description="Disordered" evidence="4">
    <location>
        <begin position="485"/>
        <end position="549"/>
    </location>
</feature>
<feature type="region of interest" description="Disordered" evidence="4">
    <location>
        <begin position="564"/>
        <end position="613"/>
    </location>
</feature>
<feature type="coiled-coil region" evidence="2">
    <location>
        <begin position="175"/>
        <end position="209"/>
    </location>
</feature>
<feature type="coiled-coil region" evidence="2">
    <location>
        <begin position="425"/>
        <end position="462"/>
    </location>
</feature>
<feature type="compositionally biased region" description="Basic residues" evidence="4">
    <location>
        <begin position="55"/>
        <end position="68"/>
    </location>
</feature>
<feature type="compositionally biased region" description="Acidic residues" evidence="4">
    <location>
        <begin position="72"/>
        <end position="81"/>
    </location>
</feature>
<feature type="compositionally biased region" description="Basic and acidic residues" evidence="4">
    <location>
        <begin position="167"/>
        <end position="176"/>
    </location>
</feature>
<feature type="compositionally biased region" description="Low complexity" evidence="4">
    <location>
        <begin position="215"/>
        <end position="235"/>
    </location>
</feature>
<feature type="compositionally biased region" description="Basic and acidic residues" evidence="4">
    <location>
        <begin position="236"/>
        <end position="247"/>
    </location>
</feature>
<feature type="compositionally biased region" description="Low complexity" evidence="4">
    <location>
        <begin position="510"/>
        <end position="521"/>
    </location>
</feature>
<feature type="compositionally biased region" description="Polar residues" evidence="4">
    <location>
        <begin position="569"/>
        <end position="586"/>
    </location>
</feature>
<feature type="compositionally biased region" description="Low complexity" evidence="4">
    <location>
        <begin position="602"/>
        <end position="613"/>
    </location>
</feature>
<name>RTF1_CAEEL</name>
<keyword id="KW-0175">Coiled coil</keyword>
<keyword id="KW-0539">Nucleus</keyword>
<keyword id="KW-1185">Reference proteome</keyword>
<keyword id="KW-0804">Transcription</keyword>
<keyword id="KW-0805">Transcription regulation</keyword>
<sequence>MSSSESASSDEETKRRAPATSDSDSDSDAGPKPGKPLSTDSSASDSDAEKPQAKPAKKKTLTKRKRRATGSSDDDQVDDDLFADKEDKARWKKLTELEKEQEIFERMEARENAIAREEIAQQLAKKAKKSSEKGVKTEKRRKMNSGGSDAGSPKRKASSDSDSEMDAAFHRPSDINRKHKEKNAMDALKNKRKEIEKKNAKNEALSIDAVFGANSGSSSSSSSSESSRSSSSSRESSPERVSEKDKIVKKDVDGLSELRRARLSRHKLSLMIHAPFFDSTVVGCYVRLGQGQMSGSGSKYRIWKIVGVEESNKVYELEGKKTNKIIKCQNGGSERPFRMQFVSNADFEQIEFDEWLLACKRHGNLPTVDIMDKKKQDIEKAINHKYSDKEVDLMIKEKSKYQTVPRNFAMTKANWSKQKELAQQRGDIREAEQIQTKIDEIERQADELEKERSKSISAIAFINHRNRSKIKDQVLSGQLKIEENSQDDPFTRKKGGMRVVSGSKSRLDGTLSASSSTTNLSDGGKDKSSSLAKPTQPPPSTQIKKKTDISSLHDFDLDIDLGKLKDFSTPESSGNKRPSISSSKGVSLSDYRMRRSGGGDAGSSTSAAPSSAV</sequence>